<sequence length="475" mass="52737">MSPQTETKTGVGFKAGVKEYKLNYYTPEYETKDTDILAAFRVTPQPGVPPEEAGAAVAAESSTGTWTTVWTDGLTSLDRYKGRCYDIEPVAGEENQFIAYVAYPLDLFEEGSVTNMFTSIVGNVFGFKALRALRLEDLRIPPAYTKTFQGPPHGIQVERDKLNKYGRPLLGCTIKPKLGLSAKNYGRAVYECLRGGLDFTKDDENVNSQPFMRWRDRFLFCAEALYKAQTETGEIKGHYLNATAGTCEEMMKRAIFARELGVPIVMHDYLTGGFTANTSLAHYCRDNGLLLHIHRAMHAVIDRQKNHGIHFRVLAKALRMSGGDHIHSGTVVGKLEGERDITLGFVDLLRDDFVEKDRSRGIYFTQDWVSLPGVLPVASGGIHVWHMPALTEIFGDDSVLQFGGGTLGHPWGNAPGAVANRVALEACVQARNEGRDLAREGNEIIREASKWSPELAAACEVWKEIKFEFEAMDTL</sequence>
<organism>
    <name type="scientific">Populus tremuloides</name>
    <name type="common">Quaking aspen</name>
    <dbReference type="NCBI Taxonomy" id="3693"/>
    <lineage>
        <taxon>Eukaryota</taxon>
        <taxon>Viridiplantae</taxon>
        <taxon>Streptophyta</taxon>
        <taxon>Embryophyta</taxon>
        <taxon>Tracheophyta</taxon>
        <taxon>Spermatophyta</taxon>
        <taxon>Magnoliopsida</taxon>
        <taxon>eudicotyledons</taxon>
        <taxon>Gunneridae</taxon>
        <taxon>Pentapetalae</taxon>
        <taxon>rosids</taxon>
        <taxon>fabids</taxon>
        <taxon>Malpighiales</taxon>
        <taxon>Salicaceae</taxon>
        <taxon>Saliceae</taxon>
        <taxon>Populus</taxon>
    </lineage>
</organism>
<gene>
    <name evidence="1" type="primary">rbcL</name>
</gene>
<name>RBL_POPTM</name>
<evidence type="ECO:0000255" key="1">
    <source>
        <dbReference type="HAMAP-Rule" id="MF_01338"/>
    </source>
</evidence>
<keyword id="KW-0007">Acetylation</keyword>
<keyword id="KW-0113">Calvin cycle</keyword>
<keyword id="KW-0120">Carbon dioxide fixation</keyword>
<keyword id="KW-0150">Chloroplast</keyword>
<keyword id="KW-1015">Disulfide bond</keyword>
<keyword id="KW-0456">Lyase</keyword>
<keyword id="KW-0460">Magnesium</keyword>
<keyword id="KW-0479">Metal-binding</keyword>
<keyword id="KW-0488">Methylation</keyword>
<keyword id="KW-0503">Monooxygenase</keyword>
<keyword id="KW-0560">Oxidoreductase</keyword>
<keyword id="KW-0601">Photorespiration</keyword>
<keyword id="KW-0602">Photosynthesis</keyword>
<keyword id="KW-0934">Plastid</keyword>
<dbReference type="EC" id="4.1.1.39" evidence="1"/>
<dbReference type="EMBL" id="M58392">
    <property type="protein sequence ID" value="AAA82698.1"/>
    <property type="molecule type" value="Genomic_DNA"/>
</dbReference>
<dbReference type="PIR" id="A46161">
    <property type="entry name" value="A46161"/>
</dbReference>
<dbReference type="RefSeq" id="YP_010183343.1">
    <property type="nucleotide sequence ID" value="NC_058279.1"/>
</dbReference>
<dbReference type="SMR" id="P48713"/>
<dbReference type="GeneID" id="68210141"/>
<dbReference type="GO" id="GO:0009507">
    <property type="term" value="C:chloroplast"/>
    <property type="evidence" value="ECO:0007669"/>
    <property type="project" value="UniProtKB-SubCell"/>
</dbReference>
<dbReference type="GO" id="GO:0000287">
    <property type="term" value="F:magnesium ion binding"/>
    <property type="evidence" value="ECO:0007669"/>
    <property type="project" value="UniProtKB-UniRule"/>
</dbReference>
<dbReference type="GO" id="GO:0004497">
    <property type="term" value="F:monooxygenase activity"/>
    <property type="evidence" value="ECO:0007669"/>
    <property type="project" value="UniProtKB-KW"/>
</dbReference>
<dbReference type="GO" id="GO:0016984">
    <property type="term" value="F:ribulose-bisphosphate carboxylase activity"/>
    <property type="evidence" value="ECO:0007669"/>
    <property type="project" value="UniProtKB-UniRule"/>
</dbReference>
<dbReference type="GO" id="GO:0009853">
    <property type="term" value="P:photorespiration"/>
    <property type="evidence" value="ECO:0007669"/>
    <property type="project" value="UniProtKB-KW"/>
</dbReference>
<dbReference type="GO" id="GO:0019253">
    <property type="term" value="P:reductive pentose-phosphate cycle"/>
    <property type="evidence" value="ECO:0007669"/>
    <property type="project" value="UniProtKB-UniRule"/>
</dbReference>
<dbReference type="CDD" id="cd08212">
    <property type="entry name" value="RuBisCO_large_I"/>
    <property type="match status" value="1"/>
</dbReference>
<dbReference type="FunFam" id="3.20.20.110:FF:000001">
    <property type="entry name" value="Ribulose bisphosphate carboxylase large chain"/>
    <property type="match status" value="1"/>
</dbReference>
<dbReference type="FunFam" id="3.30.70.150:FF:000001">
    <property type="entry name" value="Ribulose bisphosphate carboxylase large chain"/>
    <property type="match status" value="1"/>
</dbReference>
<dbReference type="Gene3D" id="3.20.20.110">
    <property type="entry name" value="Ribulose bisphosphate carboxylase, large subunit, C-terminal domain"/>
    <property type="match status" value="1"/>
</dbReference>
<dbReference type="Gene3D" id="3.30.70.150">
    <property type="entry name" value="RuBisCO large subunit, N-terminal domain"/>
    <property type="match status" value="1"/>
</dbReference>
<dbReference type="HAMAP" id="MF_01338">
    <property type="entry name" value="RuBisCO_L_type1"/>
    <property type="match status" value="1"/>
</dbReference>
<dbReference type="InterPro" id="IPR033966">
    <property type="entry name" value="RuBisCO"/>
</dbReference>
<dbReference type="InterPro" id="IPR020878">
    <property type="entry name" value="RuBisCo_large_chain_AS"/>
</dbReference>
<dbReference type="InterPro" id="IPR000685">
    <property type="entry name" value="RuBisCO_lsu_C"/>
</dbReference>
<dbReference type="InterPro" id="IPR036376">
    <property type="entry name" value="RuBisCO_lsu_C_sf"/>
</dbReference>
<dbReference type="InterPro" id="IPR017443">
    <property type="entry name" value="RuBisCO_lsu_fd_N"/>
</dbReference>
<dbReference type="InterPro" id="IPR036422">
    <property type="entry name" value="RuBisCO_lsu_N_sf"/>
</dbReference>
<dbReference type="InterPro" id="IPR020888">
    <property type="entry name" value="RuBisCO_lsuI"/>
</dbReference>
<dbReference type="NCBIfam" id="NF003252">
    <property type="entry name" value="PRK04208.1"/>
    <property type="match status" value="1"/>
</dbReference>
<dbReference type="PANTHER" id="PTHR42704">
    <property type="entry name" value="RIBULOSE BISPHOSPHATE CARBOXYLASE"/>
    <property type="match status" value="1"/>
</dbReference>
<dbReference type="PANTHER" id="PTHR42704:SF16">
    <property type="entry name" value="RIBULOSE BISPHOSPHATE CARBOXYLASE LARGE CHAIN"/>
    <property type="match status" value="1"/>
</dbReference>
<dbReference type="Pfam" id="PF00016">
    <property type="entry name" value="RuBisCO_large"/>
    <property type="match status" value="1"/>
</dbReference>
<dbReference type="Pfam" id="PF02788">
    <property type="entry name" value="RuBisCO_large_N"/>
    <property type="match status" value="1"/>
</dbReference>
<dbReference type="SFLD" id="SFLDG01052">
    <property type="entry name" value="RuBisCO"/>
    <property type="match status" value="1"/>
</dbReference>
<dbReference type="SFLD" id="SFLDS00014">
    <property type="entry name" value="RuBisCO"/>
    <property type="match status" value="1"/>
</dbReference>
<dbReference type="SFLD" id="SFLDG00301">
    <property type="entry name" value="RuBisCO-like_proteins"/>
    <property type="match status" value="1"/>
</dbReference>
<dbReference type="SUPFAM" id="SSF51649">
    <property type="entry name" value="RuBisCo, C-terminal domain"/>
    <property type="match status" value="1"/>
</dbReference>
<dbReference type="SUPFAM" id="SSF54966">
    <property type="entry name" value="RuBisCO, large subunit, small (N-terminal) domain"/>
    <property type="match status" value="1"/>
</dbReference>
<dbReference type="PROSITE" id="PS00157">
    <property type="entry name" value="RUBISCO_LARGE"/>
    <property type="match status" value="1"/>
</dbReference>
<protein>
    <recommendedName>
        <fullName evidence="1">Ribulose bisphosphate carboxylase large chain</fullName>
        <shortName evidence="1">RuBisCO large subunit</shortName>
        <ecNumber evidence="1">4.1.1.39</ecNumber>
    </recommendedName>
</protein>
<geneLocation type="chloroplast"/>
<feature type="propeptide" id="PRO_0000031375" evidence="1">
    <location>
        <begin position="1"/>
        <end position="2"/>
    </location>
</feature>
<feature type="chain" id="PRO_0000031376" description="Ribulose bisphosphate carboxylase large chain">
    <location>
        <begin position="3"/>
        <end position="475"/>
    </location>
</feature>
<feature type="active site" description="Proton acceptor" evidence="1">
    <location>
        <position position="175"/>
    </location>
</feature>
<feature type="active site" description="Proton acceptor" evidence="1">
    <location>
        <position position="294"/>
    </location>
</feature>
<feature type="binding site" description="in homodimeric partner" evidence="1">
    <location>
        <position position="123"/>
    </location>
    <ligand>
        <name>substrate</name>
    </ligand>
</feature>
<feature type="binding site" evidence="1">
    <location>
        <position position="173"/>
    </location>
    <ligand>
        <name>substrate</name>
    </ligand>
</feature>
<feature type="binding site" evidence="1">
    <location>
        <position position="177"/>
    </location>
    <ligand>
        <name>substrate</name>
    </ligand>
</feature>
<feature type="binding site" description="via carbamate group" evidence="1">
    <location>
        <position position="201"/>
    </location>
    <ligand>
        <name>Mg(2+)</name>
        <dbReference type="ChEBI" id="CHEBI:18420"/>
    </ligand>
</feature>
<feature type="binding site" evidence="1">
    <location>
        <position position="203"/>
    </location>
    <ligand>
        <name>Mg(2+)</name>
        <dbReference type="ChEBI" id="CHEBI:18420"/>
    </ligand>
</feature>
<feature type="binding site" evidence="1">
    <location>
        <position position="204"/>
    </location>
    <ligand>
        <name>Mg(2+)</name>
        <dbReference type="ChEBI" id="CHEBI:18420"/>
    </ligand>
</feature>
<feature type="binding site" evidence="1">
    <location>
        <position position="295"/>
    </location>
    <ligand>
        <name>substrate</name>
    </ligand>
</feature>
<feature type="binding site" evidence="1">
    <location>
        <position position="327"/>
    </location>
    <ligand>
        <name>substrate</name>
    </ligand>
</feature>
<feature type="binding site" evidence="1">
    <location>
        <position position="379"/>
    </location>
    <ligand>
        <name>substrate</name>
    </ligand>
</feature>
<feature type="site" description="Transition state stabilizer" evidence="1">
    <location>
        <position position="334"/>
    </location>
</feature>
<feature type="modified residue" description="N-acetylproline" evidence="1">
    <location>
        <position position="3"/>
    </location>
</feature>
<feature type="modified residue" description="N6,N6,N6-trimethyllysine" evidence="1">
    <location>
        <position position="14"/>
    </location>
</feature>
<feature type="modified residue" description="N6-carboxylysine" evidence="1">
    <location>
        <position position="201"/>
    </location>
</feature>
<feature type="disulfide bond" description="Interchain; in linked form" evidence="1">
    <location>
        <position position="247"/>
    </location>
</feature>
<reference key="1">
    <citation type="journal article" date="1992" name="Proc. Natl. Acad. Sci. U.S.A.">
        <title>Extensive variation in evolutionary rate of rbcL gene sequences among seed plants.</title>
        <authorList>
            <person name="Bousquet J."/>
            <person name="Strauss S.H."/>
            <person name="Doerksen A.H."/>
            <person name="Price R.A."/>
        </authorList>
    </citation>
    <scope>NUCLEOTIDE SEQUENCE [GENOMIC DNA]</scope>
    <source>
        <tissue>Leaf</tissue>
    </source>
</reference>
<accession>P48713</accession>
<proteinExistence type="inferred from homology"/>
<comment type="function">
    <text evidence="1">RuBisCO catalyzes two reactions: the carboxylation of D-ribulose 1,5-bisphosphate, the primary event in carbon dioxide fixation, as well as the oxidative fragmentation of the pentose substrate in the photorespiration process. Both reactions occur simultaneously and in competition at the same active site.</text>
</comment>
<comment type="catalytic activity">
    <reaction evidence="1">
        <text>2 (2R)-3-phosphoglycerate + 2 H(+) = D-ribulose 1,5-bisphosphate + CO2 + H2O</text>
        <dbReference type="Rhea" id="RHEA:23124"/>
        <dbReference type="ChEBI" id="CHEBI:15377"/>
        <dbReference type="ChEBI" id="CHEBI:15378"/>
        <dbReference type="ChEBI" id="CHEBI:16526"/>
        <dbReference type="ChEBI" id="CHEBI:57870"/>
        <dbReference type="ChEBI" id="CHEBI:58272"/>
        <dbReference type="EC" id="4.1.1.39"/>
    </reaction>
</comment>
<comment type="catalytic activity">
    <reaction evidence="1">
        <text>D-ribulose 1,5-bisphosphate + O2 = 2-phosphoglycolate + (2R)-3-phosphoglycerate + 2 H(+)</text>
        <dbReference type="Rhea" id="RHEA:36631"/>
        <dbReference type="ChEBI" id="CHEBI:15378"/>
        <dbReference type="ChEBI" id="CHEBI:15379"/>
        <dbReference type="ChEBI" id="CHEBI:57870"/>
        <dbReference type="ChEBI" id="CHEBI:58033"/>
        <dbReference type="ChEBI" id="CHEBI:58272"/>
    </reaction>
</comment>
<comment type="cofactor">
    <cofactor evidence="1">
        <name>Mg(2+)</name>
        <dbReference type="ChEBI" id="CHEBI:18420"/>
    </cofactor>
    <text evidence="1">Binds 1 Mg(2+) ion per subunit.</text>
</comment>
<comment type="subunit">
    <text evidence="1">Heterohexadecamer of 8 large chains and 8 small chains; disulfide-linked. The disulfide link is formed within the large subunit homodimers.</text>
</comment>
<comment type="subcellular location">
    <subcellularLocation>
        <location>Plastid</location>
        <location>Chloroplast</location>
    </subcellularLocation>
</comment>
<comment type="PTM">
    <text evidence="1">The disulfide bond which can form in the large chain dimeric partners within the hexadecamer appears to be associated with oxidative stress and protein turnover.</text>
</comment>
<comment type="miscellaneous">
    <text evidence="1">The basic functional RuBisCO is composed of a large chain homodimer in a 'head-to-tail' conformation. In form I RuBisCO this homodimer is arranged in a barrel-like tetramer with the small subunits forming a tetrameric 'cap' on each end of the 'barrel'.</text>
</comment>
<comment type="similarity">
    <text evidence="1">Belongs to the RuBisCO large chain family. Type I subfamily.</text>
</comment>